<evidence type="ECO:0000250" key="1"/>
<evidence type="ECO:0000250" key="2">
    <source>
        <dbReference type="UniProtKB" id="Q9H469"/>
    </source>
</evidence>
<evidence type="ECO:0000305" key="3"/>
<feature type="chain" id="PRO_0000410904" description="F-box/LRR-repeat protein 15">
    <location>
        <begin position="1"/>
        <end position="300"/>
    </location>
</feature>
<feature type="domain" description="F-box">
    <location>
        <begin position="19"/>
        <end position="66"/>
    </location>
</feature>
<feature type="repeat" description="LRR 1">
    <location>
        <begin position="141"/>
        <end position="162"/>
    </location>
</feature>
<feature type="repeat" description="LRR 2">
    <location>
        <begin position="167"/>
        <end position="188"/>
    </location>
</feature>
<feature type="repeat" description="LRR 3">
    <location>
        <begin position="194"/>
        <end position="215"/>
    </location>
</feature>
<feature type="repeat" description="LRR 4">
    <location>
        <begin position="220"/>
        <end position="241"/>
    </location>
</feature>
<feature type="repeat" description="LRR 5">
    <location>
        <begin position="246"/>
        <end position="267"/>
    </location>
</feature>
<feature type="region of interest" description="Interaction with SMURF1" evidence="1">
    <location>
        <begin position="113"/>
        <end position="269"/>
    </location>
</feature>
<feature type="modified residue" description="N-acetylmethionine" evidence="2">
    <location>
        <position position="1"/>
    </location>
</feature>
<gene>
    <name type="primary">FBXL15</name>
</gene>
<sequence length="300" mass="32983">MEPPMEPSGGEQEPGAVRLLDLPWEDVLLPHILSRVPLRQLLRLQRVSRAFRALVQLHLAGLRRFDAAQVGPQIPRAALAWLLRDAEGLQELALAPCHEWLSDEDLVPVLTRNPQLRSVALAGCGQLSRRALGALAEGCPRLQRLSLAHCDWVDGLALRGLADRCPALEELDLTACRQLKDEAIVYLAQRRGAGLRSLSLAVNANVGDAAVQELARNCPELEHLDLTGCLRVGSDGVRTLAEYCPALRSLRVRHCHHVAEPSLSRLRKRGVDIDVEPPLHQALVLLQDMAGFAPFVNLQV</sequence>
<keyword id="KW-0007">Acetylation</keyword>
<keyword id="KW-0963">Cytoplasm</keyword>
<keyword id="KW-0433">Leucine-rich repeat</keyword>
<keyword id="KW-1185">Reference proteome</keyword>
<keyword id="KW-0677">Repeat</keyword>
<keyword id="KW-0833">Ubl conjugation pathway</keyword>
<reference key="1">
    <citation type="journal article" date="2005" name="Nature">
        <title>Genome sequence, comparative analysis and haplotype structure of the domestic dog.</title>
        <authorList>
            <person name="Lindblad-Toh K."/>
            <person name="Wade C.M."/>
            <person name="Mikkelsen T.S."/>
            <person name="Karlsson E.K."/>
            <person name="Jaffe D.B."/>
            <person name="Kamal M."/>
            <person name="Clamp M."/>
            <person name="Chang J.L."/>
            <person name="Kulbokas E.J. III"/>
            <person name="Zody M.C."/>
            <person name="Mauceli E."/>
            <person name="Xie X."/>
            <person name="Breen M."/>
            <person name="Wayne R.K."/>
            <person name="Ostrander E.A."/>
            <person name="Ponting C.P."/>
            <person name="Galibert F."/>
            <person name="Smith D.R."/>
            <person name="deJong P.J."/>
            <person name="Kirkness E.F."/>
            <person name="Alvarez P."/>
            <person name="Biagi T."/>
            <person name="Brockman W."/>
            <person name="Butler J."/>
            <person name="Chin C.-W."/>
            <person name="Cook A."/>
            <person name="Cuff J."/>
            <person name="Daly M.J."/>
            <person name="DeCaprio D."/>
            <person name="Gnerre S."/>
            <person name="Grabherr M."/>
            <person name="Kellis M."/>
            <person name="Kleber M."/>
            <person name="Bardeleben C."/>
            <person name="Goodstadt L."/>
            <person name="Heger A."/>
            <person name="Hitte C."/>
            <person name="Kim L."/>
            <person name="Koepfli K.-P."/>
            <person name="Parker H.G."/>
            <person name="Pollinger J.P."/>
            <person name="Searle S.M.J."/>
            <person name="Sutter N.B."/>
            <person name="Thomas R."/>
            <person name="Webber C."/>
            <person name="Baldwin J."/>
            <person name="Abebe A."/>
            <person name="Abouelleil A."/>
            <person name="Aftuck L."/>
            <person name="Ait-Zahra M."/>
            <person name="Aldredge T."/>
            <person name="Allen N."/>
            <person name="An P."/>
            <person name="Anderson S."/>
            <person name="Antoine C."/>
            <person name="Arachchi H."/>
            <person name="Aslam A."/>
            <person name="Ayotte L."/>
            <person name="Bachantsang P."/>
            <person name="Barry A."/>
            <person name="Bayul T."/>
            <person name="Benamara M."/>
            <person name="Berlin A."/>
            <person name="Bessette D."/>
            <person name="Blitshteyn B."/>
            <person name="Bloom T."/>
            <person name="Blye J."/>
            <person name="Boguslavskiy L."/>
            <person name="Bonnet C."/>
            <person name="Boukhgalter B."/>
            <person name="Brown A."/>
            <person name="Cahill P."/>
            <person name="Calixte N."/>
            <person name="Camarata J."/>
            <person name="Cheshatsang Y."/>
            <person name="Chu J."/>
            <person name="Citroen M."/>
            <person name="Collymore A."/>
            <person name="Cooke P."/>
            <person name="Dawoe T."/>
            <person name="Daza R."/>
            <person name="Decktor K."/>
            <person name="DeGray S."/>
            <person name="Dhargay N."/>
            <person name="Dooley K."/>
            <person name="Dooley K."/>
            <person name="Dorje P."/>
            <person name="Dorjee K."/>
            <person name="Dorris L."/>
            <person name="Duffey N."/>
            <person name="Dupes A."/>
            <person name="Egbiremolen O."/>
            <person name="Elong R."/>
            <person name="Falk J."/>
            <person name="Farina A."/>
            <person name="Faro S."/>
            <person name="Ferguson D."/>
            <person name="Ferreira P."/>
            <person name="Fisher S."/>
            <person name="FitzGerald M."/>
            <person name="Foley K."/>
            <person name="Foley C."/>
            <person name="Franke A."/>
            <person name="Friedrich D."/>
            <person name="Gage D."/>
            <person name="Garber M."/>
            <person name="Gearin G."/>
            <person name="Giannoukos G."/>
            <person name="Goode T."/>
            <person name="Goyette A."/>
            <person name="Graham J."/>
            <person name="Grandbois E."/>
            <person name="Gyaltsen K."/>
            <person name="Hafez N."/>
            <person name="Hagopian D."/>
            <person name="Hagos B."/>
            <person name="Hall J."/>
            <person name="Healy C."/>
            <person name="Hegarty R."/>
            <person name="Honan T."/>
            <person name="Horn A."/>
            <person name="Houde N."/>
            <person name="Hughes L."/>
            <person name="Hunnicutt L."/>
            <person name="Husby M."/>
            <person name="Jester B."/>
            <person name="Jones C."/>
            <person name="Kamat A."/>
            <person name="Kanga B."/>
            <person name="Kells C."/>
            <person name="Khazanovich D."/>
            <person name="Kieu A.C."/>
            <person name="Kisner P."/>
            <person name="Kumar M."/>
            <person name="Lance K."/>
            <person name="Landers T."/>
            <person name="Lara M."/>
            <person name="Lee W."/>
            <person name="Leger J.-P."/>
            <person name="Lennon N."/>
            <person name="Leuper L."/>
            <person name="LeVine S."/>
            <person name="Liu J."/>
            <person name="Liu X."/>
            <person name="Lokyitsang Y."/>
            <person name="Lokyitsang T."/>
            <person name="Lui A."/>
            <person name="Macdonald J."/>
            <person name="Major J."/>
            <person name="Marabella R."/>
            <person name="Maru K."/>
            <person name="Matthews C."/>
            <person name="McDonough S."/>
            <person name="Mehta T."/>
            <person name="Meldrim J."/>
            <person name="Melnikov A."/>
            <person name="Meneus L."/>
            <person name="Mihalev A."/>
            <person name="Mihova T."/>
            <person name="Miller K."/>
            <person name="Mittelman R."/>
            <person name="Mlenga V."/>
            <person name="Mulrain L."/>
            <person name="Munson G."/>
            <person name="Navidi A."/>
            <person name="Naylor J."/>
            <person name="Nguyen T."/>
            <person name="Nguyen N."/>
            <person name="Nguyen C."/>
            <person name="Nguyen T."/>
            <person name="Nicol R."/>
            <person name="Norbu N."/>
            <person name="Norbu C."/>
            <person name="Novod N."/>
            <person name="Nyima T."/>
            <person name="Olandt P."/>
            <person name="O'Neill B."/>
            <person name="O'Neill K."/>
            <person name="Osman S."/>
            <person name="Oyono L."/>
            <person name="Patti C."/>
            <person name="Perrin D."/>
            <person name="Phunkhang P."/>
            <person name="Pierre F."/>
            <person name="Priest M."/>
            <person name="Rachupka A."/>
            <person name="Raghuraman S."/>
            <person name="Rameau R."/>
            <person name="Ray V."/>
            <person name="Raymond C."/>
            <person name="Rege F."/>
            <person name="Rise C."/>
            <person name="Rogers J."/>
            <person name="Rogov P."/>
            <person name="Sahalie J."/>
            <person name="Settipalli S."/>
            <person name="Sharpe T."/>
            <person name="Shea T."/>
            <person name="Sheehan M."/>
            <person name="Sherpa N."/>
            <person name="Shi J."/>
            <person name="Shih D."/>
            <person name="Sloan J."/>
            <person name="Smith C."/>
            <person name="Sparrow T."/>
            <person name="Stalker J."/>
            <person name="Stange-Thomann N."/>
            <person name="Stavropoulos S."/>
            <person name="Stone C."/>
            <person name="Stone S."/>
            <person name="Sykes S."/>
            <person name="Tchuinga P."/>
            <person name="Tenzing P."/>
            <person name="Tesfaye S."/>
            <person name="Thoulutsang D."/>
            <person name="Thoulutsang Y."/>
            <person name="Topham K."/>
            <person name="Topping I."/>
            <person name="Tsamla T."/>
            <person name="Vassiliev H."/>
            <person name="Venkataraman V."/>
            <person name="Vo A."/>
            <person name="Wangchuk T."/>
            <person name="Wangdi T."/>
            <person name="Weiand M."/>
            <person name="Wilkinson J."/>
            <person name="Wilson A."/>
            <person name="Yadav S."/>
            <person name="Yang S."/>
            <person name="Yang X."/>
            <person name="Young G."/>
            <person name="Yu Q."/>
            <person name="Zainoun J."/>
            <person name="Zembek L."/>
            <person name="Zimmer A."/>
            <person name="Lander E.S."/>
        </authorList>
    </citation>
    <scope>NUCLEOTIDE SEQUENCE [LARGE SCALE GENOMIC DNA]</scope>
    <source>
        <strain>Boxer</strain>
    </source>
</reference>
<organism>
    <name type="scientific">Canis lupus familiaris</name>
    <name type="common">Dog</name>
    <name type="synonym">Canis familiaris</name>
    <dbReference type="NCBI Taxonomy" id="9615"/>
    <lineage>
        <taxon>Eukaryota</taxon>
        <taxon>Metazoa</taxon>
        <taxon>Chordata</taxon>
        <taxon>Craniata</taxon>
        <taxon>Vertebrata</taxon>
        <taxon>Euteleostomi</taxon>
        <taxon>Mammalia</taxon>
        <taxon>Eutheria</taxon>
        <taxon>Laurasiatheria</taxon>
        <taxon>Carnivora</taxon>
        <taxon>Caniformia</taxon>
        <taxon>Canidae</taxon>
        <taxon>Canis</taxon>
    </lineage>
</organism>
<comment type="function">
    <text evidence="1">Substrate recognition component of a SCF (SKP1-CUL1-F-box protein) E3 ubiquitin-protein ligase complex which mediates the ubiquitination and subsequent proteasomal degradation of SMURF1, thereby acting as a positive regulator of the BMP signaling pathway. Required for dorsal/ventral pattern formation and bone mass maintenance. Also mediates ubiquitination of SMURF2 and WWP2 (By similarity).</text>
</comment>
<comment type="pathway">
    <text>Protein modification; protein ubiquitination.</text>
</comment>
<comment type="subunit">
    <text evidence="1">Part of the SCF (SKP1-CUL1-F-box) E3 ubiquitin-protein ligase complex SCF(FBXL15) composed of CUL1, SKP1, RBX1 and FBXL15.</text>
</comment>
<comment type="subcellular location">
    <subcellularLocation>
        <location evidence="1">Cytoplasm</location>
    </subcellularLocation>
</comment>
<comment type="similarity">
    <text evidence="3">Belongs to the FBXL15 family.</text>
</comment>
<name>FXL15_CANLF</name>
<dbReference type="RefSeq" id="XP_013964418.1">
    <property type="nucleotide sequence ID" value="XM_014108943.3"/>
</dbReference>
<dbReference type="RefSeq" id="XP_038296338.1">
    <property type="nucleotide sequence ID" value="XM_038440410.1"/>
</dbReference>
<dbReference type="RefSeq" id="XP_038296339.1">
    <property type="nucleotide sequence ID" value="XM_038440411.1"/>
</dbReference>
<dbReference type="RefSeq" id="XP_038296340.1">
    <property type="nucleotide sequence ID" value="XM_038440412.1"/>
</dbReference>
<dbReference type="RefSeq" id="XP_038296341.1">
    <property type="nucleotide sequence ID" value="XM_038440413.1"/>
</dbReference>
<dbReference type="RefSeq" id="XP_038316672.1">
    <property type="nucleotide sequence ID" value="XM_038460744.1"/>
</dbReference>
<dbReference type="RefSeq" id="XP_038316673.1">
    <property type="nucleotide sequence ID" value="XM_038460745.1"/>
</dbReference>
<dbReference type="RefSeq" id="XP_038316674.1">
    <property type="nucleotide sequence ID" value="XM_038460746.1"/>
</dbReference>
<dbReference type="RefSeq" id="XP_038434565.1">
    <property type="nucleotide sequence ID" value="XM_038578637.1"/>
</dbReference>
<dbReference type="RefSeq" id="XP_038434566.1">
    <property type="nucleotide sequence ID" value="XM_038578638.1"/>
</dbReference>
<dbReference type="RefSeq" id="XP_038434567.1">
    <property type="nucleotide sequence ID" value="XM_038578639.1"/>
</dbReference>
<dbReference type="RefSeq" id="XP_038434568.1">
    <property type="nucleotide sequence ID" value="XM_038578640.1"/>
</dbReference>
<dbReference type="SMR" id="E2RKN7"/>
<dbReference type="FunCoup" id="E2RKN7">
    <property type="interactions" value="42"/>
</dbReference>
<dbReference type="STRING" id="9615.ENSCAFP00000014945"/>
<dbReference type="PaxDb" id="9612-ENSCAFP00000042809"/>
<dbReference type="Ensembl" id="ENSCAFT00000016159.4">
    <property type="protein sequence ID" value="ENSCAFP00000014945.2"/>
    <property type="gene ID" value="ENSCAFG00000010176.5"/>
</dbReference>
<dbReference type="Ensembl" id="ENSCAFT00030045669.1">
    <property type="protein sequence ID" value="ENSCAFP00030039892.1"/>
    <property type="gene ID" value="ENSCAFG00030024776.1"/>
</dbReference>
<dbReference type="Ensembl" id="ENSCAFT00040043313.1">
    <property type="protein sequence ID" value="ENSCAFP00040037785.1"/>
    <property type="gene ID" value="ENSCAFG00040023298.1"/>
</dbReference>
<dbReference type="Ensembl" id="ENSCAFT00845042978.1">
    <property type="protein sequence ID" value="ENSCAFP00845033693.1"/>
    <property type="gene ID" value="ENSCAFG00845024340.1"/>
</dbReference>
<dbReference type="GeneID" id="100855612"/>
<dbReference type="KEGG" id="cfa:100855612"/>
<dbReference type="CTD" id="79176"/>
<dbReference type="VEuPathDB" id="HostDB:ENSCAFG00845024340"/>
<dbReference type="VGNC" id="VGNC:52991">
    <property type="gene designation" value="FBXL15"/>
</dbReference>
<dbReference type="eggNOG" id="KOG1947">
    <property type="taxonomic scope" value="Eukaryota"/>
</dbReference>
<dbReference type="GeneTree" id="ENSGT00940000160250"/>
<dbReference type="HOGENOM" id="CLU_065717_2_0_1"/>
<dbReference type="InParanoid" id="E2RKN7"/>
<dbReference type="OMA" id="CHRITER"/>
<dbReference type="OrthoDB" id="27842at2759"/>
<dbReference type="Reactome" id="R-CFA-8951664">
    <property type="pathway name" value="Neddylation"/>
</dbReference>
<dbReference type="Reactome" id="R-CFA-983168">
    <property type="pathway name" value="Antigen processing: Ubiquitination &amp; Proteasome degradation"/>
</dbReference>
<dbReference type="UniPathway" id="UPA00143"/>
<dbReference type="Proteomes" id="UP000002254">
    <property type="component" value="Chromosome 28"/>
</dbReference>
<dbReference type="Proteomes" id="UP000694429">
    <property type="component" value="Chromosome 28"/>
</dbReference>
<dbReference type="Proteomes" id="UP000694542">
    <property type="component" value="Chromosome 28"/>
</dbReference>
<dbReference type="Proteomes" id="UP000805418">
    <property type="component" value="Chromosome 28"/>
</dbReference>
<dbReference type="Bgee" id="ENSCAFG00000010176">
    <property type="expression patterns" value="Expressed in temporal lobe and 49 other cell types or tissues"/>
</dbReference>
<dbReference type="GO" id="GO:0005737">
    <property type="term" value="C:cytoplasm"/>
    <property type="evidence" value="ECO:0000250"/>
    <property type="project" value="UniProtKB"/>
</dbReference>
<dbReference type="GO" id="GO:0019005">
    <property type="term" value="C:SCF ubiquitin ligase complex"/>
    <property type="evidence" value="ECO:0000250"/>
    <property type="project" value="UniProtKB"/>
</dbReference>
<dbReference type="GO" id="GO:0030282">
    <property type="term" value="P:bone mineralization"/>
    <property type="evidence" value="ECO:0000250"/>
    <property type="project" value="UniProtKB"/>
</dbReference>
<dbReference type="GO" id="GO:0009953">
    <property type="term" value="P:dorsal/ventral pattern formation"/>
    <property type="evidence" value="ECO:0000250"/>
    <property type="project" value="UniProtKB"/>
</dbReference>
<dbReference type="GO" id="GO:0000086">
    <property type="term" value="P:G2/M transition of mitotic cell cycle"/>
    <property type="evidence" value="ECO:0000250"/>
    <property type="project" value="UniProtKB"/>
</dbReference>
<dbReference type="GO" id="GO:0030513">
    <property type="term" value="P:positive regulation of BMP signaling pathway"/>
    <property type="evidence" value="ECO:0000250"/>
    <property type="project" value="UniProtKB"/>
</dbReference>
<dbReference type="GO" id="GO:0016567">
    <property type="term" value="P:protein ubiquitination"/>
    <property type="evidence" value="ECO:0000250"/>
    <property type="project" value="UniProtKB"/>
</dbReference>
<dbReference type="GO" id="GO:0031146">
    <property type="term" value="P:SCF-dependent proteasomal ubiquitin-dependent protein catabolic process"/>
    <property type="evidence" value="ECO:0000250"/>
    <property type="project" value="UniProtKB"/>
</dbReference>
<dbReference type="CDD" id="cd22126">
    <property type="entry name" value="F-box_FBXL15"/>
    <property type="match status" value="1"/>
</dbReference>
<dbReference type="FunFam" id="3.80.10.10:FF:000113">
    <property type="entry name" value="F-box/LRR-repeat protein 15 isoform X1"/>
    <property type="match status" value="1"/>
</dbReference>
<dbReference type="Gene3D" id="3.80.10.10">
    <property type="entry name" value="Ribonuclease Inhibitor"/>
    <property type="match status" value="1"/>
</dbReference>
<dbReference type="InterPro" id="IPR036047">
    <property type="entry name" value="F-box-like_dom_sf"/>
</dbReference>
<dbReference type="InterPro" id="IPR001810">
    <property type="entry name" value="F-box_dom"/>
</dbReference>
<dbReference type="InterPro" id="IPR050648">
    <property type="entry name" value="F-box_LRR-repeat"/>
</dbReference>
<dbReference type="InterPro" id="IPR001611">
    <property type="entry name" value="Leu-rich_rpt"/>
</dbReference>
<dbReference type="InterPro" id="IPR006553">
    <property type="entry name" value="Leu-rich_rpt_Cys-con_subtyp"/>
</dbReference>
<dbReference type="InterPro" id="IPR032675">
    <property type="entry name" value="LRR_dom_sf"/>
</dbReference>
<dbReference type="InterPro" id="IPR055411">
    <property type="entry name" value="LRR_FXL15/At3g58940/PEG3-like"/>
</dbReference>
<dbReference type="PANTHER" id="PTHR13382:SF79">
    <property type="entry name" value="F-BOX AND LEUCINE RICH REPEAT PROTEIN 15"/>
    <property type="match status" value="1"/>
</dbReference>
<dbReference type="PANTHER" id="PTHR13382">
    <property type="entry name" value="MITOCHONDRIAL ATP SYNTHASE COUPLING FACTOR B"/>
    <property type="match status" value="1"/>
</dbReference>
<dbReference type="Pfam" id="PF00646">
    <property type="entry name" value="F-box"/>
    <property type="match status" value="1"/>
</dbReference>
<dbReference type="Pfam" id="PF13516">
    <property type="entry name" value="LRR_6"/>
    <property type="match status" value="1"/>
</dbReference>
<dbReference type="Pfam" id="PF24758">
    <property type="entry name" value="LRR_At5g56370"/>
    <property type="match status" value="1"/>
</dbReference>
<dbReference type="SMART" id="SM00367">
    <property type="entry name" value="LRR_CC"/>
    <property type="match status" value="6"/>
</dbReference>
<dbReference type="SUPFAM" id="SSF81383">
    <property type="entry name" value="F-box domain"/>
    <property type="match status" value="1"/>
</dbReference>
<dbReference type="SUPFAM" id="SSF52047">
    <property type="entry name" value="RNI-like"/>
    <property type="match status" value="1"/>
</dbReference>
<protein>
    <recommendedName>
        <fullName>F-box/LRR-repeat protein 15</fullName>
    </recommendedName>
</protein>
<accession>E2RKN7</accession>
<accession>F1Q0D5</accession>
<proteinExistence type="inferred from homology"/>